<feature type="chain" id="PRO_1000075582" description="Methionine--tRNA ligase">
    <location>
        <begin position="1"/>
        <end position="546"/>
    </location>
</feature>
<feature type="short sequence motif" description="'HIGH' region">
    <location>
        <begin position="15"/>
        <end position="25"/>
    </location>
</feature>
<feature type="short sequence motif" description="'KMSKS' region">
    <location>
        <begin position="332"/>
        <end position="336"/>
    </location>
</feature>
<feature type="binding site" evidence="1">
    <location>
        <position position="146"/>
    </location>
    <ligand>
        <name>Zn(2+)</name>
        <dbReference type="ChEBI" id="CHEBI:29105"/>
    </ligand>
</feature>
<feature type="binding site" evidence="1">
    <location>
        <position position="149"/>
    </location>
    <ligand>
        <name>Zn(2+)</name>
        <dbReference type="ChEBI" id="CHEBI:29105"/>
    </ligand>
</feature>
<feature type="binding site" evidence="1">
    <location>
        <position position="159"/>
    </location>
    <ligand>
        <name>Zn(2+)</name>
        <dbReference type="ChEBI" id="CHEBI:29105"/>
    </ligand>
</feature>
<feature type="binding site" evidence="1">
    <location>
        <position position="162"/>
    </location>
    <ligand>
        <name>Zn(2+)</name>
        <dbReference type="ChEBI" id="CHEBI:29105"/>
    </ligand>
</feature>
<feature type="binding site" evidence="1">
    <location>
        <position position="335"/>
    </location>
    <ligand>
        <name>ATP</name>
        <dbReference type="ChEBI" id="CHEBI:30616"/>
    </ligand>
</feature>
<comment type="function">
    <text evidence="1">Is required not only for elongation of protein synthesis but also for the initiation of all mRNA translation through initiator tRNA(fMet) aminoacylation.</text>
</comment>
<comment type="catalytic activity">
    <reaction evidence="1">
        <text>tRNA(Met) + L-methionine + ATP = L-methionyl-tRNA(Met) + AMP + diphosphate</text>
        <dbReference type="Rhea" id="RHEA:13481"/>
        <dbReference type="Rhea" id="RHEA-COMP:9667"/>
        <dbReference type="Rhea" id="RHEA-COMP:9698"/>
        <dbReference type="ChEBI" id="CHEBI:30616"/>
        <dbReference type="ChEBI" id="CHEBI:33019"/>
        <dbReference type="ChEBI" id="CHEBI:57844"/>
        <dbReference type="ChEBI" id="CHEBI:78442"/>
        <dbReference type="ChEBI" id="CHEBI:78530"/>
        <dbReference type="ChEBI" id="CHEBI:456215"/>
        <dbReference type="EC" id="6.1.1.10"/>
    </reaction>
</comment>
<comment type="cofactor">
    <cofactor evidence="1">
        <name>Zn(2+)</name>
        <dbReference type="ChEBI" id="CHEBI:29105"/>
    </cofactor>
    <text evidence="1">Binds 1 zinc ion per subunit.</text>
</comment>
<comment type="subunit">
    <text evidence="1">Monomer.</text>
</comment>
<comment type="subcellular location">
    <subcellularLocation>
        <location evidence="1">Cytoplasm</location>
    </subcellularLocation>
</comment>
<comment type="similarity">
    <text evidence="1">Belongs to the class-I aminoacyl-tRNA synthetase family. MetG type 1 subfamily.</text>
</comment>
<gene>
    <name evidence="1" type="primary">metG</name>
    <name type="ordered locus">CBUD_0308</name>
</gene>
<reference key="1">
    <citation type="journal article" date="2009" name="Infect. Immun.">
        <title>Comparative genomics reveal extensive transposon-mediated genomic plasticity and diversity among potential effector proteins within the genus Coxiella.</title>
        <authorList>
            <person name="Beare P.A."/>
            <person name="Unsworth N."/>
            <person name="Andoh M."/>
            <person name="Voth D.E."/>
            <person name="Omsland A."/>
            <person name="Gilk S.D."/>
            <person name="Williams K.P."/>
            <person name="Sobral B.W."/>
            <person name="Kupko J.J. III"/>
            <person name="Porcella S.F."/>
            <person name="Samuel J.E."/>
            <person name="Heinzen R.A."/>
        </authorList>
    </citation>
    <scope>NUCLEOTIDE SEQUENCE [LARGE SCALE GENOMIC DNA]</scope>
    <source>
        <strain>Dugway 5J108-111</strain>
    </source>
</reference>
<organism>
    <name type="scientific">Coxiella burnetii (strain Dugway 5J108-111)</name>
    <dbReference type="NCBI Taxonomy" id="434922"/>
    <lineage>
        <taxon>Bacteria</taxon>
        <taxon>Pseudomonadati</taxon>
        <taxon>Pseudomonadota</taxon>
        <taxon>Gammaproteobacteria</taxon>
        <taxon>Legionellales</taxon>
        <taxon>Coxiellaceae</taxon>
        <taxon>Coxiella</taxon>
    </lineage>
</organism>
<keyword id="KW-0030">Aminoacyl-tRNA synthetase</keyword>
<keyword id="KW-0067">ATP-binding</keyword>
<keyword id="KW-0963">Cytoplasm</keyword>
<keyword id="KW-0436">Ligase</keyword>
<keyword id="KW-0479">Metal-binding</keyword>
<keyword id="KW-0547">Nucleotide-binding</keyword>
<keyword id="KW-0648">Protein biosynthesis</keyword>
<keyword id="KW-0862">Zinc</keyword>
<name>SYM_COXBN</name>
<sequence>MTTEKRQILVTAALPYANGPIHLGHMVEHIQADIWVRFQRLKGNDCLFICGEDAHGTAIMITAQKQGLPPEALVAKMHKEHARDLGGFLIEYDNFYTTHSPENRELAELIYTRLKDKGDIFAKTISQAYDPVKEIFLPDRFIRGTCPRCGAKDQYGDVCEVCGATYSPTELIDPVSALSGAKPIEKNSEHFFFSLNRYTQLLKKWIDAGHLQPQVANKLKEWFSEDLKPWDISRDAPYFGFEIPHAANKYFYVWLDAPIGYMASLKNLSKQRPSVNFDAYWKEGSQTELYHFVGKDIVYFHALFWPAMLSGAGFRLPTAIYVHGYLTVNGQKMSKSRGTFITAHHYLDHLSPEYLRYYYAAKLSAQVEDIDLNLDDFIQRVNADLIGKYVNLASRCAGFITKNFGGKLANELPEPDLYESFLQTEQTITDYYESLNYSKAVRVIMSLADRANQYIDAKKPWALAKEINQEAQVQAVCTQGLNLFKILTTYLKPILPVTAKKVEQFLNCDELNFANLKTPLLDHSVNPFEPLMQRLLPETAAQLTHE</sequence>
<protein>
    <recommendedName>
        <fullName evidence="1">Methionine--tRNA ligase</fullName>
        <ecNumber evidence="1">6.1.1.10</ecNumber>
    </recommendedName>
    <alternativeName>
        <fullName evidence="1">Methionyl-tRNA synthetase</fullName>
        <shortName evidence="1">MetRS</shortName>
    </alternativeName>
</protein>
<proteinExistence type="inferred from homology"/>
<dbReference type="EC" id="6.1.1.10" evidence="1"/>
<dbReference type="EMBL" id="CP000733">
    <property type="protein sequence ID" value="ABS77009.1"/>
    <property type="molecule type" value="Genomic_DNA"/>
</dbReference>
<dbReference type="RefSeq" id="WP_005772215.1">
    <property type="nucleotide sequence ID" value="NC_009727.1"/>
</dbReference>
<dbReference type="SMR" id="A9KDF8"/>
<dbReference type="KEGG" id="cbd:CBUD_0308"/>
<dbReference type="HOGENOM" id="CLU_009710_7_0_6"/>
<dbReference type="Proteomes" id="UP000008555">
    <property type="component" value="Chromosome"/>
</dbReference>
<dbReference type="GO" id="GO:0005829">
    <property type="term" value="C:cytosol"/>
    <property type="evidence" value="ECO:0007669"/>
    <property type="project" value="TreeGrafter"/>
</dbReference>
<dbReference type="GO" id="GO:0005524">
    <property type="term" value="F:ATP binding"/>
    <property type="evidence" value="ECO:0007669"/>
    <property type="project" value="UniProtKB-UniRule"/>
</dbReference>
<dbReference type="GO" id="GO:0046872">
    <property type="term" value="F:metal ion binding"/>
    <property type="evidence" value="ECO:0007669"/>
    <property type="project" value="UniProtKB-KW"/>
</dbReference>
<dbReference type="GO" id="GO:0004825">
    <property type="term" value="F:methionine-tRNA ligase activity"/>
    <property type="evidence" value="ECO:0007669"/>
    <property type="project" value="UniProtKB-UniRule"/>
</dbReference>
<dbReference type="GO" id="GO:0006431">
    <property type="term" value="P:methionyl-tRNA aminoacylation"/>
    <property type="evidence" value="ECO:0007669"/>
    <property type="project" value="UniProtKB-UniRule"/>
</dbReference>
<dbReference type="CDD" id="cd07957">
    <property type="entry name" value="Anticodon_Ia_Met"/>
    <property type="match status" value="1"/>
</dbReference>
<dbReference type="CDD" id="cd00814">
    <property type="entry name" value="MetRS_core"/>
    <property type="match status" value="1"/>
</dbReference>
<dbReference type="FunFam" id="1.10.730.10:FF:000005">
    <property type="entry name" value="Methionine--tRNA ligase"/>
    <property type="match status" value="1"/>
</dbReference>
<dbReference type="FunFam" id="2.20.28.20:FF:000001">
    <property type="entry name" value="Methionine--tRNA ligase"/>
    <property type="match status" value="1"/>
</dbReference>
<dbReference type="Gene3D" id="3.40.50.620">
    <property type="entry name" value="HUPs"/>
    <property type="match status" value="1"/>
</dbReference>
<dbReference type="Gene3D" id="1.10.730.10">
    <property type="entry name" value="Isoleucyl-tRNA Synthetase, Domain 1"/>
    <property type="match status" value="1"/>
</dbReference>
<dbReference type="Gene3D" id="2.20.28.20">
    <property type="entry name" value="Methionyl-tRNA synthetase, Zn-domain"/>
    <property type="match status" value="1"/>
</dbReference>
<dbReference type="HAMAP" id="MF_00098">
    <property type="entry name" value="Met_tRNA_synth_type1"/>
    <property type="match status" value="1"/>
</dbReference>
<dbReference type="InterPro" id="IPR001412">
    <property type="entry name" value="aa-tRNA-synth_I_CS"/>
</dbReference>
<dbReference type="InterPro" id="IPR041872">
    <property type="entry name" value="Anticodon_Met"/>
</dbReference>
<dbReference type="InterPro" id="IPR023458">
    <property type="entry name" value="Met-tRNA_ligase_1"/>
</dbReference>
<dbReference type="InterPro" id="IPR014758">
    <property type="entry name" value="Met-tRNA_synth"/>
</dbReference>
<dbReference type="InterPro" id="IPR015413">
    <property type="entry name" value="Methionyl/Leucyl_tRNA_Synth"/>
</dbReference>
<dbReference type="InterPro" id="IPR033911">
    <property type="entry name" value="MetRS_core"/>
</dbReference>
<dbReference type="InterPro" id="IPR029038">
    <property type="entry name" value="MetRS_Zn"/>
</dbReference>
<dbReference type="InterPro" id="IPR014729">
    <property type="entry name" value="Rossmann-like_a/b/a_fold"/>
</dbReference>
<dbReference type="InterPro" id="IPR009080">
    <property type="entry name" value="tRNAsynth_Ia_anticodon-bd"/>
</dbReference>
<dbReference type="NCBIfam" id="TIGR00398">
    <property type="entry name" value="metG"/>
    <property type="match status" value="1"/>
</dbReference>
<dbReference type="NCBIfam" id="NF001100">
    <property type="entry name" value="PRK00133.1"/>
    <property type="match status" value="1"/>
</dbReference>
<dbReference type="PANTHER" id="PTHR45765">
    <property type="entry name" value="METHIONINE--TRNA LIGASE"/>
    <property type="match status" value="1"/>
</dbReference>
<dbReference type="PANTHER" id="PTHR45765:SF1">
    <property type="entry name" value="METHIONINE--TRNA LIGASE, CYTOPLASMIC"/>
    <property type="match status" value="1"/>
</dbReference>
<dbReference type="Pfam" id="PF19303">
    <property type="entry name" value="Anticodon_3"/>
    <property type="match status" value="1"/>
</dbReference>
<dbReference type="Pfam" id="PF09334">
    <property type="entry name" value="tRNA-synt_1g"/>
    <property type="match status" value="1"/>
</dbReference>
<dbReference type="PRINTS" id="PR01041">
    <property type="entry name" value="TRNASYNTHMET"/>
</dbReference>
<dbReference type="SUPFAM" id="SSF47323">
    <property type="entry name" value="Anticodon-binding domain of a subclass of class I aminoacyl-tRNA synthetases"/>
    <property type="match status" value="1"/>
</dbReference>
<dbReference type="SUPFAM" id="SSF57770">
    <property type="entry name" value="Methionyl-tRNA synthetase (MetRS), Zn-domain"/>
    <property type="match status" value="1"/>
</dbReference>
<dbReference type="SUPFAM" id="SSF52374">
    <property type="entry name" value="Nucleotidylyl transferase"/>
    <property type="match status" value="1"/>
</dbReference>
<dbReference type="PROSITE" id="PS00178">
    <property type="entry name" value="AA_TRNA_LIGASE_I"/>
    <property type="match status" value="1"/>
</dbReference>
<evidence type="ECO:0000255" key="1">
    <source>
        <dbReference type="HAMAP-Rule" id="MF_00098"/>
    </source>
</evidence>
<accession>A9KDF8</accession>